<gene>
    <name type="primary">hemZ</name>
    <name type="ordered locus">RHOS4_23070</name>
    <name type="ORF">RSP_0699</name>
</gene>
<protein>
    <recommendedName>
        <fullName>Oxygen-independent coproporphyrinogen III oxidase</fullName>
        <shortName>CPO</shortName>
        <ecNumber evidence="1">1.3.98.3</ecNumber>
    </recommendedName>
    <alternativeName>
        <fullName>Coproporphyrinogen III dehydrogenase</fullName>
        <shortName>CPDH</shortName>
    </alternativeName>
</protein>
<name>HEMN_CERS4</name>
<comment type="function">
    <text evidence="3">Involved in the heme and chlorophyll biosynthesis. Catalyzes the anaerobic oxidative decarboxylation of propionate groups of rings A and B of coproporphyrinogen III to yield the vinyl groups in protoporphyrinogen IX.</text>
</comment>
<comment type="catalytic activity">
    <reaction evidence="1">
        <text>coproporphyrinogen III + 2 S-adenosyl-L-methionine = protoporphyrinogen IX + 2 5'-deoxyadenosine + 2 L-methionine + 2 CO2</text>
        <dbReference type="Rhea" id="RHEA:15425"/>
        <dbReference type="ChEBI" id="CHEBI:16526"/>
        <dbReference type="ChEBI" id="CHEBI:17319"/>
        <dbReference type="ChEBI" id="CHEBI:57307"/>
        <dbReference type="ChEBI" id="CHEBI:57309"/>
        <dbReference type="ChEBI" id="CHEBI:57844"/>
        <dbReference type="ChEBI" id="CHEBI:59789"/>
        <dbReference type="EC" id="1.3.98.3"/>
    </reaction>
</comment>
<comment type="cofactor">
    <cofactor evidence="1">
        <name>[4Fe-4S] cluster</name>
        <dbReference type="ChEBI" id="CHEBI:49883"/>
    </cofactor>
    <text evidence="1">Binds 1 [4Fe-4S] cluster. The cluster is coordinated with 3 cysteines and an exchangeable S-adenosyl-L-methionine.</text>
</comment>
<comment type="pathway">
    <text>Porphyrin-containing compound metabolism; protoporphyrin-IX biosynthesis; protoporphyrinogen-IX from coproporphyrinogen-III (AdoMet route): step 1/1.</text>
</comment>
<comment type="subunit">
    <text evidence="1">Monomer.</text>
</comment>
<comment type="subcellular location">
    <subcellularLocation>
        <location evidence="4">Cytoplasm</location>
    </subcellularLocation>
</comment>
<comment type="similarity">
    <text evidence="4">Belongs to the anaerobic coproporphyrinogen-III oxidase family.</text>
</comment>
<accession>P51008</accession>
<accession>Q3J009</accession>
<sequence length="450" mass="49103">MAAVSHLAKLGLFDARVPRYTSYPTAPNFGVGVTENLHADWISSIPAGGSISLYLHVPFCRRLCWFCACRTQGTSSDAPVRAYAAALKSELALLRARLAPGVRLARMHWGGGTPTLLPPTLIHELALAIRDAVPSDAETDFSVEIDPTEIDAARLDALFEAGMTRVSIGVQDFDPLIQQSIGREQSFELTQRLTEDLRHRGLMGLDADILYGLPHQTAPGVADSVQKLLSLSPDRVAVLGYAHVPAVSRRQLMIPTASIPGPEERLDLFETARTLILWDGYQQVGLDHFARAGDPLAHAHACGRLCRSFQGYTDDRAEVLIGLGASAISRFPQGFTQNAPSTSDHLRAIRSGRFSTARGHVLSDEDRLRGRMIEQLLCEFRISRAQILARFAVAPERLETLFRTCAAAFPGVVEITGHGLEILEEGRPLARIVARSFDRYDASGKPQGAI</sequence>
<reference key="1">
    <citation type="journal article" date="1995" name="J. Bacteriol.">
        <title>Aerobic and anaerobic regulation in Rhodobacter sphaeroides 2.4.1: the role of the fnrL gene.</title>
        <authorList>
            <person name="Zeilstra-Ryalls J.H."/>
            <person name="Kaplan S."/>
        </authorList>
    </citation>
    <scope>NUCLEOTIDE SEQUENCE [GENOMIC DNA]</scope>
    <scope>FUNCTION</scope>
</reference>
<reference key="2">
    <citation type="submission" date="2005-09" db="EMBL/GenBank/DDBJ databases">
        <title>Complete sequence of chromosome 1 of Rhodobacter sphaeroides 2.4.1.</title>
        <authorList>
            <person name="Copeland A."/>
            <person name="Lucas S."/>
            <person name="Lapidus A."/>
            <person name="Barry K."/>
            <person name="Detter J.C."/>
            <person name="Glavina T."/>
            <person name="Hammon N."/>
            <person name="Israni S."/>
            <person name="Pitluck S."/>
            <person name="Richardson P."/>
            <person name="Mackenzie C."/>
            <person name="Choudhary M."/>
            <person name="Larimer F."/>
            <person name="Hauser L.J."/>
            <person name="Land M."/>
            <person name="Donohue T.J."/>
            <person name="Kaplan S."/>
        </authorList>
    </citation>
    <scope>NUCLEOTIDE SEQUENCE [LARGE SCALE GENOMIC DNA]</scope>
    <source>
        <strain>ATCC 17023 / DSM 158 / JCM 6121 / CCUG 31486 / LMG 2827 / NBRC 12203 / NCIMB 8253 / ATH 2.4.1.</strain>
    </source>
</reference>
<keyword id="KW-0004">4Fe-4S</keyword>
<keyword id="KW-0077">Bacteriochlorophyll biosynthesis</keyword>
<keyword id="KW-0149">Chlorophyll biosynthesis</keyword>
<keyword id="KW-0963">Cytoplasm</keyword>
<keyword id="KW-0408">Iron</keyword>
<keyword id="KW-0411">Iron-sulfur</keyword>
<keyword id="KW-0479">Metal-binding</keyword>
<keyword id="KW-0560">Oxidoreductase</keyword>
<keyword id="KW-0627">Porphyrin biosynthesis</keyword>
<keyword id="KW-1185">Reference proteome</keyword>
<keyword id="KW-0949">S-adenosyl-L-methionine</keyword>
<dbReference type="EC" id="1.3.98.3" evidence="1"/>
<dbReference type="EMBL" id="Z49746">
    <property type="protein sequence ID" value="CAA89819.1"/>
    <property type="molecule type" value="Genomic_DNA"/>
</dbReference>
<dbReference type="EMBL" id="CP000143">
    <property type="protein sequence ID" value="ABA79875.1"/>
    <property type="molecule type" value="Genomic_DNA"/>
</dbReference>
<dbReference type="RefSeq" id="WP_011338424.1">
    <property type="nucleotide sequence ID" value="NC_007493.2"/>
</dbReference>
<dbReference type="RefSeq" id="YP_353776.1">
    <property type="nucleotide sequence ID" value="NC_007493.2"/>
</dbReference>
<dbReference type="SMR" id="P51008"/>
<dbReference type="STRING" id="272943.RSP_0699"/>
<dbReference type="EnsemblBacteria" id="ABA79875">
    <property type="protein sequence ID" value="ABA79875"/>
    <property type="gene ID" value="RSP_0699"/>
</dbReference>
<dbReference type="GeneID" id="3718177"/>
<dbReference type="KEGG" id="rsp:RSP_0699"/>
<dbReference type="PATRIC" id="fig|272943.9.peg.2651"/>
<dbReference type="eggNOG" id="COG0635">
    <property type="taxonomic scope" value="Bacteria"/>
</dbReference>
<dbReference type="OrthoDB" id="9808022at2"/>
<dbReference type="PhylomeDB" id="P51008"/>
<dbReference type="UniPathway" id="UPA00251">
    <property type="reaction ID" value="UER00323"/>
</dbReference>
<dbReference type="Proteomes" id="UP000002703">
    <property type="component" value="Chromosome 1"/>
</dbReference>
<dbReference type="GO" id="GO:0005737">
    <property type="term" value="C:cytoplasm"/>
    <property type="evidence" value="ECO:0000250"/>
    <property type="project" value="UniProtKB"/>
</dbReference>
<dbReference type="GO" id="GO:0051539">
    <property type="term" value="F:4 iron, 4 sulfur cluster binding"/>
    <property type="evidence" value="ECO:0000250"/>
    <property type="project" value="UniProtKB"/>
</dbReference>
<dbReference type="GO" id="GO:0051989">
    <property type="term" value="F:coproporphyrinogen dehydrogenase activity"/>
    <property type="evidence" value="ECO:0000315"/>
    <property type="project" value="UniProtKB"/>
</dbReference>
<dbReference type="GO" id="GO:0004109">
    <property type="term" value="F:coproporphyrinogen oxidase activity"/>
    <property type="evidence" value="ECO:0007669"/>
    <property type="project" value="InterPro"/>
</dbReference>
<dbReference type="GO" id="GO:0046872">
    <property type="term" value="F:metal ion binding"/>
    <property type="evidence" value="ECO:0007669"/>
    <property type="project" value="UniProtKB-KW"/>
</dbReference>
<dbReference type="GO" id="GO:0030494">
    <property type="term" value="P:bacteriochlorophyll biosynthetic process"/>
    <property type="evidence" value="ECO:0007669"/>
    <property type="project" value="UniProtKB-KW"/>
</dbReference>
<dbReference type="GO" id="GO:0006779">
    <property type="term" value="P:porphyrin-containing compound biosynthetic process"/>
    <property type="evidence" value="ECO:0000315"/>
    <property type="project" value="UniProtKB"/>
</dbReference>
<dbReference type="GO" id="GO:0006782">
    <property type="term" value="P:protoporphyrinogen IX biosynthetic process"/>
    <property type="evidence" value="ECO:0000250"/>
    <property type="project" value="UniProtKB"/>
</dbReference>
<dbReference type="CDD" id="cd01335">
    <property type="entry name" value="Radical_SAM"/>
    <property type="match status" value="1"/>
</dbReference>
<dbReference type="Gene3D" id="1.10.10.920">
    <property type="match status" value="1"/>
</dbReference>
<dbReference type="Gene3D" id="3.20.20.70">
    <property type="entry name" value="Aldolase class I"/>
    <property type="match status" value="1"/>
</dbReference>
<dbReference type="InterPro" id="IPR013785">
    <property type="entry name" value="Aldolase_TIM"/>
</dbReference>
<dbReference type="InterPro" id="IPR004558">
    <property type="entry name" value="Coprogen_oxidase_HemN"/>
</dbReference>
<dbReference type="InterPro" id="IPR034505">
    <property type="entry name" value="Coproporphyrinogen-III_oxidase"/>
</dbReference>
<dbReference type="InterPro" id="IPR006638">
    <property type="entry name" value="Elp3/MiaA/NifB-like_rSAM"/>
</dbReference>
<dbReference type="InterPro" id="IPR007197">
    <property type="entry name" value="rSAM"/>
</dbReference>
<dbReference type="NCBIfam" id="TIGR00538">
    <property type="entry name" value="hemN"/>
    <property type="match status" value="1"/>
</dbReference>
<dbReference type="PANTHER" id="PTHR13932">
    <property type="entry name" value="COPROPORPHYRINIGEN III OXIDASE"/>
    <property type="match status" value="1"/>
</dbReference>
<dbReference type="PANTHER" id="PTHR13932:SF6">
    <property type="entry name" value="OXYGEN-INDEPENDENT COPROPORPHYRINOGEN III OXIDASE"/>
    <property type="match status" value="1"/>
</dbReference>
<dbReference type="Pfam" id="PF04055">
    <property type="entry name" value="Radical_SAM"/>
    <property type="match status" value="1"/>
</dbReference>
<dbReference type="PIRSF" id="PIRSF000167">
    <property type="entry name" value="HemN"/>
    <property type="match status" value="1"/>
</dbReference>
<dbReference type="SFLD" id="SFLDG01065">
    <property type="entry name" value="anaerobic_coproporphyrinogen-I"/>
    <property type="match status" value="1"/>
</dbReference>
<dbReference type="SFLD" id="SFLDS00029">
    <property type="entry name" value="Radical_SAM"/>
    <property type="match status" value="1"/>
</dbReference>
<dbReference type="SMART" id="SM00729">
    <property type="entry name" value="Elp3"/>
    <property type="match status" value="1"/>
</dbReference>
<dbReference type="SUPFAM" id="SSF102114">
    <property type="entry name" value="Radical SAM enzymes"/>
    <property type="match status" value="1"/>
</dbReference>
<dbReference type="PROSITE" id="PS51918">
    <property type="entry name" value="RADICAL_SAM"/>
    <property type="match status" value="1"/>
</dbReference>
<evidence type="ECO:0000250" key="1">
    <source>
        <dbReference type="UniProtKB" id="P32131"/>
    </source>
</evidence>
<evidence type="ECO:0000255" key="2">
    <source>
        <dbReference type="PROSITE-ProRule" id="PRU01266"/>
    </source>
</evidence>
<evidence type="ECO:0000269" key="3">
    <source>
    </source>
</evidence>
<evidence type="ECO:0000305" key="4"/>
<organism>
    <name type="scientific">Cereibacter sphaeroides (strain ATCC 17023 / DSM 158 / JCM 6121 / CCUG 31486 / LMG 2827 / NBRC 12203 / NCIMB 8253 / ATH 2.4.1.)</name>
    <name type="common">Rhodobacter sphaeroides</name>
    <dbReference type="NCBI Taxonomy" id="272943"/>
    <lineage>
        <taxon>Bacteria</taxon>
        <taxon>Pseudomonadati</taxon>
        <taxon>Pseudomonadota</taxon>
        <taxon>Alphaproteobacteria</taxon>
        <taxon>Rhodobacterales</taxon>
        <taxon>Paracoccaceae</taxon>
        <taxon>Cereibacter</taxon>
    </lineage>
</organism>
<proteinExistence type="inferred from homology"/>
<feature type="chain" id="PRO_0000109950" description="Oxygen-independent coproporphyrinogen III oxidase">
    <location>
        <begin position="1"/>
        <end position="450"/>
    </location>
</feature>
<feature type="domain" description="Radical SAM core" evidence="2">
    <location>
        <begin position="45"/>
        <end position="282"/>
    </location>
</feature>
<feature type="binding site" evidence="1">
    <location>
        <position position="54"/>
    </location>
    <ligand>
        <name>S-adenosyl-L-methionine</name>
        <dbReference type="ChEBI" id="CHEBI:59789"/>
        <label>1</label>
    </ligand>
</feature>
<feature type="binding site" evidence="1">
    <location>
        <position position="60"/>
    </location>
    <ligand>
        <name>[4Fe-4S] cluster</name>
        <dbReference type="ChEBI" id="CHEBI:49883"/>
        <note>4Fe-4S-S-AdoMet</note>
    </ligand>
</feature>
<feature type="binding site" evidence="1">
    <location>
        <position position="64"/>
    </location>
    <ligand>
        <name>[4Fe-4S] cluster</name>
        <dbReference type="ChEBI" id="CHEBI:49883"/>
        <note>4Fe-4S-S-AdoMet</note>
    </ligand>
</feature>
<feature type="binding site" evidence="1">
    <location>
        <position position="66"/>
    </location>
    <ligand>
        <name>S-adenosyl-L-methionine</name>
        <dbReference type="ChEBI" id="CHEBI:59789"/>
        <label>2</label>
    </ligand>
</feature>
<feature type="binding site" evidence="1">
    <location>
        <position position="67"/>
    </location>
    <ligand>
        <name>[4Fe-4S] cluster</name>
        <dbReference type="ChEBI" id="CHEBI:49883"/>
        <note>4Fe-4S-S-AdoMet</note>
    </ligand>
</feature>
<feature type="binding site" evidence="1">
    <location>
        <position position="111"/>
    </location>
    <ligand>
        <name>S-adenosyl-L-methionine</name>
        <dbReference type="ChEBI" id="CHEBI:59789"/>
        <label>1</label>
    </ligand>
</feature>
<feature type="binding site" evidence="1">
    <location>
        <begin position="112"/>
        <end position="113"/>
    </location>
    <ligand>
        <name>S-adenosyl-L-methionine</name>
        <dbReference type="ChEBI" id="CHEBI:59789"/>
        <label>2</label>
    </ligand>
</feature>
<feature type="binding site" evidence="1">
    <location>
        <position position="144"/>
    </location>
    <ligand>
        <name>S-adenosyl-L-methionine</name>
        <dbReference type="ChEBI" id="CHEBI:59789"/>
        <label>1</label>
    </ligand>
</feature>
<feature type="binding site" evidence="1">
    <location>
        <position position="171"/>
    </location>
    <ligand>
        <name>S-adenosyl-L-methionine</name>
        <dbReference type="ChEBI" id="CHEBI:59789"/>
        <label>2</label>
    </ligand>
</feature>
<feature type="binding site" evidence="1">
    <location>
        <position position="183"/>
    </location>
    <ligand>
        <name>S-adenosyl-L-methionine</name>
        <dbReference type="ChEBI" id="CHEBI:59789"/>
        <label>2</label>
    </ligand>
</feature>
<feature type="binding site" evidence="1">
    <location>
        <position position="208"/>
    </location>
    <ligand>
        <name>S-adenosyl-L-methionine</name>
        <dbReference type="ChEBI" id="CHEBI:59789"/>
        <label>2</label>
    </ligand>
</feature>
<feature type="binding site" evidence="1">
    <location>
        <position position="242"/>
    </location>
    <ligand>
        <name>S-adenosyl-L-methionine</name>
        <dbReference type="ChEBI" id="CHEBI:59789"/>
        <label>2</label>
    </ligand>
</feature>
<feature type="binding site" evidence="1">
    <location>
        <position position="328"/>
    </location>
    <ligand>
        <name>S-adenosyl-L-methionine</name>
        <dbReference type="ChEBI" id="CHEBI:59789"/>
        <label>1</label>
    </ligand>
</feature>